<comment type="function">
    <text evidence="1">Usually encoded in the trnK tRNA gene intron. Probably assists in splicing its own and other chloroplast group II introns.</text>
</comment>
<comment type="subcellular location">
    <subcellularLocation>
        <location>Plastid</location>
        <location>Chloroplast</location>
    </subcellularLocation>
</comment>
<comment type="similarity">
    <text evidence="1">Belongs to the intron maturase 2 family. MatK subfamily.</text>
</comment>
<keyword id="KW-0150">Chloroplast</keyword>
<keyword id="KW-0507">mRNA processing</keyword>
<keyword id="KW-0934">Plastid</keyword>
<keyword id="KW-0694">RNA-binding</keyword>
<keyword id="KW-0819">tRNA processing</keyword>
<accession>Q8MCP6</accession>
<geneLocation type="chloroplast"/>
<name>MATK_MEDTR</name>
<feature type="chain" id="PRO_0000143512" description="Maturase K">
    <location>
        <begin position="1"/>
        <end position="506"/>
    </location>
</feature>
<reference key="1">
    <citation type="book" date="2003" name="Advances in legume systematics - part 10">
        <title>Phylogenetic analyses of tribes Trifolieae and Vicieae based on sequences of the plastid gene matK (Papilionoideae: Leguminosae).</title>
        <editorList>
            <person name="Klitgaard B.B."/>
            <person name="Bruneau A."/>
        </editorList>
        <authorList>
            <person name="Steele K.P."/>
            <person name="Wojciechowski M.F."/>
        </authorList>
    </citation>
    <scope>NUCLEOTIDE SEQUENCE [GENOMIC DNA]</scope>
</reference>
<proteinExistence type="inferred from homology"/>
<gene>
    <name evidence="1" type="primary">matK</name>
</gene>
<protein>
    <recommendedName>
        <fullName evidence="1">Maturase K</fullName>
    </recommendedName>
    <alternativeName>
        <fullName evidence="1">Intron maturase</fullName>
    </alternativeName>
</protein>
<evidence type="ECO:0000255" key="1">
    <source>
        <dbReference type="HAMAP-Rule" id="MF_01390"/>
    </source>
</evidence>
<sequence length="506" mass="60855">MKEYQVYLERARSRQQDFLYPLIFREYIYGLAYSHNFNRSIFLENVGSDSKYSLLIVKRLITRMYQQNHLIISANDSNKNPFWGYNKNIYSQIISEGFAIVVEIPFFLELSSSLEEAEIIKSYKNLRSIHSIFPFLEDKFTYFNYVSDIRIPYPIHLEILVQILRYWVKDAPFFHLLRLFLYNFSNWNSFITTKNSISTFSKSNPRLFLFLYNFYVCEYESIFLFLRNKSSHLRLKSFNVFFERIFFYAKREHLVEVFAKDFSYTLTFFKDPLIHYVRYQGKCILASKNSPFLMNKWKHYFIHLWQGFFYVWSQPRTMNINQLSEHSFQLLGYFLNVRVNRSVVRSQMLQNTFLIEIFNKKLDLIVPIIPLIRSLAKAKFCNVLGHPISKPVWADSSDFDIIDRFLRICRNLSHYYNGSSKKKSLYRIKYILRLSCIKTLACKHKSTVRAFLKRSGSEELLEEFFTEEEEILSLIFPRDSSTLHRLNRNRIWYLDILFSNDLVNDE</sequence>
<dbReference type="EMBL" id="AF522109">
    <property type="protein sequence ID" value="AAM82101.1"/>
    <property type="molecule type" value="Genomic_DNA"/>
</dbReference>
<dbReference type="PaxDb" id="3880-AES69832"/>
<dbReference type="eggNOG" id="ENOG502QWRZ">
    <property type="taxonomic scope" value="Eukaryota"/>
</dbReference>
<dbReference type="GO" id="GO:0009507">
    <property type="term" value="C:chloroplast"/>
    <property type="evidence" value="ECO:0007669"/>
    <property type="project" value="UniProtKB-SubCell"/>
</dbReference>
<dbReference type="GO" id="GO:0003723">
    <property type="term" value="F:RNA binding"/>
    <property type="evidence" value="ECO:0007669"/>
    <property type="project" value="UniProtKB-KW"/>
</dbReference>
<dbReference type="GO" id="GO:0006397">
    <property type="term" value="P:mRNA processing"/>
    <property type="evidence" value="ECO:0007669"/>
    <property type="project" value="UniProtKB-KW"/>
</dbReference>
<dbReference type="GO" id="GO:0008380">
    <property type="term" value="P:RNA splicing"/>
    <property type="evidence" value="ECO:0007669"/>
    <property type="project" value="UniProtKB-UniRule"/>
</dbReference>
<dbReference type="GO" id="GO:0008033">
    <property type="term" value="P:tRNA processing"/>
    <property type="evidence" value="ECO:0007669"/>
    <property type="project" value="UniProtKB-KW"/>
</dbReference>
<dbReference type="HAMAP" id="MF_01390">
    <property type="entry name" value="MatK"/>
    <property type="match status" value="1"/>
</dbReference>
<dbReference type="InterPro" id="IPR024937">
    <property type="entry name" value="Domain_X"/>
</dbReference>
<dbReference type="InterPro" id="IPR002866">
    <property type="entry name" value="Maturase_MatK"/>
</dbReference>
<dbReference type="InterPro" id="IPR024942">
    <property type="entry name" value="Maturase_MatK_N"/>
</dbReference>
<dbReference type="PANTHER" id="PTHR34811">
    <property type="entry name" value="MATURASE K"/>
    <property type="match status" value="1"/>
</dbReference>
<dbReference type="PANTHER" id="PTHR34811:SF1">
    <property type="entry name" value="MATURASE K"/>
    <property type="match status" value="1"/>
</dbReference>
<dbReference type="Pfam" id="PF01348">
    <property type="entry name" value="Intron_maturas2"/>
    <property type="match status" value="1"/>
</dbReference>
<dbReference type="Pfam" id="PF01824">
    <property type="entry name" value="MatK_N"/>
    <property type="match status" value="1"/>
</dbReference>
<organism>
    <name type="scientific">Medicago truncatula</name>
    <name type="common">Barrel medic</name>
    <name type="synonym">Medicago tribuloides</name>
    <dbReference type="NCBI Taxonomy" id="3880"/>
    <lineage>
        <taxon>Eukaryota</taxon>
        <taxon>Viridiplantae</taxon>
        <taxon>Streptophyta</taxon>
        <taxon>Embryophyta</taxon>
        <taxon>Tracheophyta</taxon>
        <taxon>Spermatophyta</taxon>
        <taxon>Magnoliopsida</taxon>
        <taxon>eudicotyledons</taxon>
        <taxon>Gunneridae</taxon>
        <taxon>Pentapetalae</taxon>
        <taxon>rosids</taxon>
        <taxon>fabids</taxon>
        <taxon>Fabales</taxon>
        <taxon>Fabaceae</taxon>
        <taxon>Papilionoideae</taxon>
        <taxon>50 kb inversion clade</taxon>
        <taxon>NPAAA clade</taxon>
        <taxon>Hologalegina</taxon>
        <taxon>IRL clade</taxon>
        <taxon>Trifolieae</taxon>
        <taxon>Medicago</taxon>
    </lineage>
</organism>